<keyword id="KW-0002">3D-structure</keyword>
<keyword id="KW-0963">Cytoplasm</keyword>
<keyword id="KW-0378">Hydrolase</keyword>
<keyword id="KW-0597">Phosphoprotein</keyword>
<keyword id="KW-0645">Protease</keyword>
<keyword id="KW-1267">Proteomics identification</keyword>
<keyword id="KW-1185">Reference proteome</keyword>
<keyword id="KW-0788">Thiol protease</keyword>
<keyword id="KW-0833">Ubl conjugation pathway</keyword>
<feature type="chain" id="PRO_0000211061" description="Ubiquitin carboxyl-terminal hydrolase isozyme L3">
    <location>
        <begin position="1"/>
        <end position="230"/>
    </location>
</feature>
<feature type="domain" description="UCH catalytic" evidence="1">
    <location>
        <begin position="5"/>
        <end position="229"/>
    </location>
</feature>
<feature type="region of interest" description="Interaction with ubiquitin" evidence="3">
    <location>
        <begin position="8"/>
        <end position="13"/>
    </location>
</feature>
<feature type="region of interest" description="Interaction with ubiquitin. Crossover loop which restricts access of large ubiquitin adducts to the active site" evidence="3 4">
    <location>
        <begin position="152"/>
        <end position="159"/>
    </location>
</feature>
<feature type="region of interest" description="Interaction with ubiquitin" evidence="3">
    <location>
        <begin position="219"/>
        <end position="224"/>
    </location>
</feature>
<feature type="active site" description="Nucleophile" evidence="1 5 6 10">
    <location>
        <position position="95"/>
    </location>
</feature>
<feature type="active site" description="Proton donor" evidence="1">
    <location>
        <position position="169"/>
    </location>
</feature>
<feature type="site" description="Transition state stabilizer" evidence="1">
    <location>
        <position position="89"/>
    </location>
</feature>
<feature type="site" description="Important for enzyme activity" evidence="1">
    <location>
        <position position="184"/>
    </location>
</feature>
<feature type="modified residue" description="Phosphoserine" evidence="12 13 14">
    <location>
        <position position="130"/>
    </location>
</feature>
<feature type="mutagenesis site" description="Decreased interaction with diubiquitin. No accumulation of free diubiquitin. Decreased levels of polyubiquitinated lysozyme." evidence="5 6">
    <original>D</original>
    <variation>A</variation>
    <location>
        <position position="33"/>
    </location>
</feature>
<feature type="mutagenesis site" description="Increased interaction with diubiquitin." evidence="5 6 10">
    <original>C</original>
    <variation>A</variation>
    <location>
        <position position="95"/>
    </location>
</feature>
<feature type="mutagenesis site" description="Abolishes enzymatic activity. Increased interaction with diubiquitin." evidence="5 6 10">
    <original>C</original>
    <variation>S</variation>
    <location>
        <position position="95"/>
    </location>
</feature>
<feature type="strand" evidence="16">
    <location>
        <begin position="9"/>
        <end position="11"/>
    </location>
</feature>
<feature type="helix" evidence="15">
    <location>
        <begin position="13"/>
        <end position="22"/>
    </location>
</feature>
<feature type="strand" evidence="15">
    <location>
        <begin position="29"/>
        <end position="33"/>
    </location>
</feature>
<feature type="helix" evidence="15">
    <location>
        <begin position="39"/>
        <end position="42"/>
    </location>
</feature>
<feature type="strand" evidence="15">
    <location>
        <begin position="49"/>
        <end position="57"/>
    </location>
</feature>
<feature type="helix" evidence="15">
    <location>
        <begin position="60"/>
        <end position="76"/>
    </location>
</feature>
<feature type="helix" evidence="17">
    <location>
        <begin position="92"/>
        <end position="94"/>
    </location>
</feature>
<feature type="helix" evidence="15">
    <location>
        <begin position="95"/>
        <end position="105"/>
    </location>
</feature>
<feature type="helix" evidence="15">
    <location>
        <begin position="106"/>
        <end position="110"/>
    </location>
</feature>
<feature type="helix" evidence="15">
    <location>
        <begin position="118"/>
        <end position="126"/>
    </location>
</feature>
<feature type="helix" evidence="15">
    <location>
        <begin position="131"/>
        <end position="139"/>
    </location>
</feature>
<feature type="helix" evidence="15">
    <location>
        <begin position="142"/>
        <end position="152"/>
    </location>
</feature>
<feature type="strand" evidence="15">
    <location>
        <begin position="155"/>
        <end position="157"/>
    </location>
</feature>
<feature type="strand" evidence="15">
    <location>
        <begin position="168"/>
        <end position="176"/>
    </location>
</feature>
<feature type="strand" evidence="15">
    <location>
        <begin position="179"/>
        <end position="183"/>
    </location>
</feature>
<feature type="strand" evidence="15">
    <location>
        <begin position="187"/>
        <end position="189"/>
    </location>
</feature>
<feature type="strand" evidence="15">
    <location>
        <begin position="191"/>
        <end position="195"/>
    </location>
</feature>
<feature type="turn" evidence="15">
    <location>
        <begin position="198"/>
        <end position="200"/>
    </location>
</feature>
<feature type="helix" evidence="15">
    <location>
        <begin position="201"/>
        <end position="215"/>
    </location>
</feature>
<feature type="strand" evidence="15">
    <location>
        <begin position="223"/>
        <end position="229"/>
    </location>
</feature>
<comment type="function">
    <text evidence="5 7 8 9 10">Deubiquitinating enzyme (DUB) that controls levels of cellular ubiquitin through processing of ubiquitin precursors and ubiquitinated proteins. Thiol protease that recognizes and hydrolyzes a peptide bond at the C-terminal glycine of either ubiquitin or NEDD8. Has a 10-fold preference for Arg and Lys at position P3'', and exhibits a preference towards 'Lys-48'-linked ubiquitin chains. Deubiquitinates ENAC in apical compartments, thereby regulating apical membrane recycling. Indirectly increases the phosphorylation of IGFIR, AKT and FOXO1 and promotes insulin-signaling and insulin-induced adipogenesis. Required for stress-response retinal, skeletal muscle and germ cell maintenance. May be involved in working memory. Can hydrolyze UBB(+1), a mutated form of ubiquitin which is not effectively degraded by the proteasome and is associated with neurogenerative disorders.</text>
</comment>
<comment type="catalytic activity">
    <reaction evidence="2 3 4 6 9 10">
        <text>Thiol-dependent hydrolysis of ester, thioester, amide, peptide and isopeptide bonds formed by the C-terminal Gly of ubiquitin (a 76-residue protein attached to proteins as an intracellular targeting signal).</text>
        <dbReference type="EC" id="3.4.19.12"/>
    </reaction>
</comment>
<comment type="activity regulation">
    <text evidence="5">Inhibited by monoubiquitin and diubiquitin.</text>
</comment>
<comment type="subunit">
    <text evidence="3">Preferentially binds diubiquitin; the interaction does not hydrolyze diubiquitin but, in vitro, inhibits the hydrolyzing activity on other substrates.</text>
</comment>
<comment type="interaction">
    <interactant intactId="EBI-954554">
        <id>P15374</id>
    </interactant>
    <interactant intactId="EBI-2107221">
        <id>Q9H078</id>
        <label>CLPB</label>
    </interactant>
    <organismsDiffer>false</organismsDiffer>
    <experiments>3</experiments>
</comment>
<comment type="interaction">
    <interactant intactId="EBI-954554">
        <id>P15374</id>
    </interactant>
    <interactant intactId="EBI-10976677">
        <id>G5E9A7</id>
        <label>DMWD</label>
    </interactant>
    <organismsDiffer>false</organismsDiffer>
    <experiments>3</experiments>
</comment>
<comment type="interaction">
    <interactant intactId="EBI-954554">
        <id>P15374</id>
    </interactant>
    <interactant intactId="EBI-1567153">
        <id>Q15797</id>
        <label>SMAD1</label>
    </interactant>
    <organismsDiffer>false</organismsDiffer>
    <experiments>2</experiments>
</comment>
<comment type="interaction">
    <interactant intactId="EBI-954554">
        <id>P15374</id>
    </interactant>
    <interactant intactId="EBI-5235340">
        <id>Q7Z699</id>
        <label>SPRED1</label>
    </interactant>
    <organismsDiffer>false</organismsDiffer>
    <experiments>3</experiments>
</comment>
<comment type="subcellular location">
    <subcellularLocation>
        <location>Cytoplasm</location>
    </subcellularLocation>
</comment>
<comment type="tissue specificity">
    <text evidence="10">Highly expressed in heart, skeletal muscle, and testis.</text>
</comment>
<comment type="miscellaneous">
    <text>Identified as a tumor-specific antigen in colon cancer.</text>
</comment>
<comment type="similarity">
    <text evidence="11">Belongs to the peptidase C12 family.</text>
</comment>
<proteinExistence type="evidence at protein level"/>
<dbReference type="EC" id="3.4.19.12" evidence="2 3 4 6 9 10"/>
<dbReference type="EMBL" id="M30496">
    <property type="protein sequence ID" value="AAA36791.1"/>
    <property type="molecule type" value="mRNA"/>
</dbReference>
<dbReference type="EMBL" id="BT019359">
    <property type="protein sequence ID" value="AAV38166.1"/>
    <property type="molecule type" value="mRNA"/>
</dbReference>
<dbReference type="EMBL" id="CR456855">
    <property type="protein sequence ID" value="CAG33136.1"/>
    <property type="molecule type" value="mRNA"/>
</dbReference>
<dbReference type="EMBL" id="AK313665">
    <property type="protein sequence ID" value="BAG36417.1"/>
    <property type="molecule type" value="mRNA"/>
</dbReference>
<dbReference type="EMBL" id="AL137244">
    <property type="status" value="NOT_ANNOTATED_CDS"/>
    <property type="molecule type" value="Genomic_DNA"/>
</dbReference>
<dbReference type="EMBL" id="CH471093">
    <property type="protein sequence ID" value="EAW80542.1"/>
    <property type="molecule type" value="Genomic_DNA"/>
</dbReference>
<dbReference type="EMBL" id="BC018125">
    <property type="protein sequence ID" value="AAH18125.1"/>
    <property type="molecule type" value="mRNA"/>
</dbReference>
<dbReference type="CCDS" id="CCDS9453.1"/>
<dbReference type="PIR" id="A40085">
    <property type="entry name" value="A40085"/>
</dbReference>
<dbReference type="RefSeq" id="NP_001257881.1">
    <property type="nucleotide sequence ID" value="NM_001270952.1"/>
</dbReference>
<dbReference type="RefSeq" id="NP_005993.1">
    <property type="nucleotide sequence ID" value="NM_006002.5"/>
</dbReference>
<dbReference type="PDB" id="1UCH">
    <property type="method" value="X-ray"/>
    <property type="resolution" value="1.80 A"/>
    <property type="chains" value="A=1-230"/>
</dbReference>
<dbReference type="PDB" id="1XD3">
    <property type="method" value="X-ray"/>
    <property type="resolution" value="1.45 A"/>
    <property type="chains" value="A/C=1-230"/>
</dbReference>
<dbReference type="PDB" id="6ISU">
    <property type="method" value="X-ray"/>
    <property type="resolution" value="1.87 A"/>
    <property type="chains" value="A=1-230"/>
</dbReference>
<dbReference type="PDB" id="6QML">
    <property type="method" value="X-ray"/>
    <property type="resolution" value="2.10 A"/>
    <property type="chains" value="A/D=4-230"/>
</dbReference>
<dbReference type="PDB" id="7YV4">
    <property type="method" value="X-ray"/>
    <property type="resolution" value="1.58 A"/>
    <property type="chains" value="A=1-230"/>
</dbReference>
<dbReference type="PDBsum" id="1UCH"/>
<dbReference type="PDBsum" id="1XD3"/>
<dbReference type="PDBsum" id="6ISU"/>
<dbReference type="PDBsum" id="6QML"/>
<dbReference type="PDBsum" id="7YV4"/>
<dbReference type="BMRB" id="P15374"/>
<dbReference type="SMR" id="P15374"/>
<dbReference type="BioGRID" id="113194">
    <property type="interactions" value="182"/>
</dbReference>
<dbReference type="DIP" id="DIP-29135N"/>
<dbReference type="FunCoup" id="P15374">
    <property type="interactions" value="2473"/>
</dbReference>
<dbReference type="IntAct" id="P15374">
    <property type="interactions" value="22"/>
</dbReference>
<dbReference type="MINT" id="P15374"/>
<dbReference type="STRING" id="9606.ENSP00000366819"/>
<dbReference type="BindingDB" id="P15374"/>
<dbReference type="ChEMBL" id="CHEMBL6195"/>
<dbReference type="DrugCentral" id="P15374"/>
<dbReference type="GuidetoPHARMACOLOGY" id="2427"/>
<dbReference type="MEROPS" id="C12.003"/>
<dbReference type="GlyGen" id="P15374">
    <property type="glycosylation" value="1 site, 1 O-linked glycan (1 site)"/>
</dbReference>
<dbReference type="iPTMnet" id="P15374"/>
<dbReference type="MetOSite" id="P15374"/>
<dbReference type="PhosphoSitePlus" id="P15374"/>
<dbReference type="BioMuta" id="UCHL3"/>
<dbReference type="DMDM" id="136682"/>
<dbReference type="OGP" id="P15374"/>
<dbReference type="REPRODUCTION-2DPAGE" id="IPI00011250"/>
<dbReference type="jPOST" id="P15374"/>
<dbReference type="MassIVE" id="P15374"/>
<dbReference type="PaxDb" id="9606-ENSP00000366819"/>
<dbReference type="PeptideAtlas" id="P15374"/>
<dbReference type="ProteomicsDB" id="53133"/>
<dbReference type="Pumba" id="P15374"/>
<dbReference type="Antibodypedia" id="10104">
    <property type="antibodies" value="428 antibodies from 39 providers"/>
</dbReference>
<dbReference type="DNASU" id="7347"/>
<dbReference type="Ensembl" id="ENST00000377595.8">
    <property type="protein sequence ID" value="ENSP00000366819.3"/>
    <property type="gene ID" value="ENSG00000118939.19"/>
</dbReference>
<dbReference type="GeneID" id="7347"/>
<dbReference type="KEGG" id="hsa:7347"/>
<dbReference type="MANE-Select" id="ENST00000377595.8">
    <property type="protein sequence ID" value="ENSP00000366819.3"/>
    <property type="RefSeq nucleotide sequence ID" value="NM_006002.5"/>
    <property type="RefSeq protein sequence ID" value="NP_005993.1"/>
</dbReference>
<dbReference type="UCSC" id="uc001vjq.5">
    <property type="organism name" value="human"/>
</dbReference>
<dbReference type="AGR" id="HGNC:12515"/>
<dbReference type="CTD" id="7347"/>
<dbReference type="DisGeNET" id="7347"/>
<dbReference type="GeneCards" id="UCHL3"/>
<dbReference type="HGNC" id="HGNC:12515">
    <property type="gene designation" value="UCHL3"/>
</dbReference>
<dbReference type="HPA" id="ENSG00000118939">
    <property type="expression patterns" value="Low tissue specificity"/>
</dbReference>
<dbReference type="MIM" id="603090">
    <property type="type" value="gene"/>
</dbReference>
<dbReference type="neXtProt" id="NX_P15374"/>
<dbReference type="OpenTargets" id="ENSG00000118939"/>
<dbReference type="PharmGKB" id="PA37162"/>
<dbReference type="VEuPathDB" id="HostDB:ENSG00000118939"/>
<dbReference type="eggNOG" id="KOG1415">
    <property type="taxonomic scope" value="Eukaryota"/>
</dbReference>
<dbReference type="GeneTree" id="ENSGT00940000154925"/>
<dbReference type="HOGENOM" id="CLU_054406_1_1_1"/>
<dbReference type="InParanoid" id="P15374"/>
<dbReference type="OMA" id="IDLHYVC"/>
<dbReference type="OrthoDB" id="427186at2759"/>
<dbReference type="PAN-GO" id="P15374">
    <property type="GO annotations" value="3 GO annotations based on evolutionary models"/>
</dbReference>
<dbReference type="PhylomeDB" id="P15374"/>
<dbReference type="TreeFam" id="TF316166"/>
<dbReference type="BRENDA" id="3.4.19.12">
    <property type="organism ID" value="2681"/>
</dbReference>
<dbReference type="PathwayCommons" id="P15374"/>
<dbReference type="Reactome" id="R-HSA-5689603">
    <property type="pathway name" value="UCH proteinases"/>
</dbReference>
<dbReference type="Reactome" id="R-HSA-8866652">
    <property type="pathway name" value="Synthesis of active ubiquitin: roles of E1 and E2 enzymes"/>
</dbReference>
<dbReference type="Reactome" id="R-HSA-8951664">
    <property type="pathway name" value="Neddylation"/>
</dbReference>
<dbReference type="SABIO-RK" id="P15374"/>
<dbReference type="SignaLink" id="P15374"/>
<dbReference type="SIGNOR" id="P15374"/>
<dbReference type="BioGRID-ORCS" id="7347">
    <property type="hits" value="9 hits in 1202 CRISPR screens"/>
</dbReference>
<dbReference type="ChiTaRS" id="UCHL3">
    <property type="organism name" value="human"/>
</dbReference>
<dbReference type="EvolutionaryTrace" id="P15374"/>
<dbReference type="GeneWiki" id="UCHL3"/>
<dbReference type="GenomeRNAi" id="7347"/>
<dbReference type="Pharos" id="P15374">
    <property type="development level" value="Tchem"/>
</dbReference>
<dbReference type="PRO" id="PR:P15374"/>
<dbReference type="Proteomes" id="UP000005640">
    <property type="component" value="Chromosome 13"/>
</dbReference>
<dbReference type="RNAct" id="P15374">
    <property type="molecule type" value="protein"/>
</dbReference>
<dbReference type="Bgee" id="ENSG00000118939">
    <property type="expression patterns" value="Expressed in right adrenal gland and 116 other cell types or tissues"/>
</dbReference>
<dbReference type="ExpressionAtlas" id="P15374">
    <property type="expression patterns" value="baseline and differential"/>
</dbReference>
<dbReference type="GO" id="GO:0005737">
    <property type="term" value="C:cytoplasm"/>
    <property type="evidence" value="ECO:0000318"/>
    <property type="project" value="GO_Central"/>
</dbReference>
<dbReference type="GO" id="GO:0005829">
    <property type="term" value="C:cytosol"/>
    <property type="evidence" value="ECO:0000314"/>
    <property type="project" value="HPA"/>
</dbReference>
<dbReference type="GO" id="GO:0005794">
    <property type="term" value="C:Golgi apparatus"/>
    <property type="evidence" value="ECO:0000314"/>
    <property type="project" value="HPA"/>
</dbReference>
<dbReference type="GO" id="GO:0005654">
    <property type="term" value="C:nucleoplasm"/>
    <property type="evidence" value="ECO:0000314"/>
    <property type="project" value="HPA"/>
</dbReference>
<dbReference type="GO" id="GO:0004843">
    <property type="term" value="F:cysteine-type deubiquitinase activity"/>
    <property type="evidence" value="ECO:0000314"/>
    <property type="project" value="UniProtKB"/>
</dbReference>
<dbReference type="GO" id="GO:0019784">
    <property type="term" value="F:deNEDDylase activity"/>
    <property type="evidence" value="ECO:0000304"/>
    <property type="project" value="Reactome"/>
</dbReference>
<dbReference type="GO" id="GO:0008233">
    <property type="term" value="F:peptidase activity"/>
    <property type="evidence" value="ECO:0000314"/>
    <property type="project" value="UniProtKB"/>
</dbReference>
<dbReference type="GO" id="GO:0043130">
    <property type="term" value="F:ubiquitin binding"/>
    <property type="evidence" value="ECO:0000314"/>
    <property type="project" value="UniProtKB"/>
</dbReference>
<dbReference type="GO" id="GO:0043687">
    <property type="term" value="P:post-translational protein modification"/>
    <property type="evidence" value="ECO:0000304"/>
    <property type="project" value="Reactome"/>
</dbReference>
<dbReference type="GO" id="GO:0030163">
    <property type="term" value="P:protein catabolic process"/>
    <property type="evidence" value="ECO:0000314"/>
    <property type="project" value="UniProtKB"/>
</dbReference>
<dbReference type="GO" id="GO:0016579">
    <property type="term" value="P:protein deubiquitination"/>
    <property type="evidence" value="ECO:0000314"/>
    <property type="project" value="UniProtKB"/>
</dbReference>
<dbReference type="GO" id="GO:0016567">
    <property type="term" value="P:protein ubiquitination"/>
    <property type="evidence" value="ECO:0000304"/>
    <property type="project" value="Reactome"/>
</dbReference>
<dbReference type="GO" id="GO:0006511">
    <property type="term" value="P:ubiquitin-dependent protein catabolic process"/>
    <property type="evidence" value="ECO:0007669"/>
    <property type="project" value="InterPro"/>
</dbReference>
<dbReference type="CDD" id="cd09616">
    <property type="entry name" value="Peptidase_C12_UCH_L1_L3"/>
    <property type="match status" value="1"/>
</dbReference>
<dbReference type="FunFam" id="3.40.532.10:FF:000005">
    <property type="entry name" value="Ubiquitin carboxyl-terminal hydrolase"/>
    <property type="match status" value="1"/>
</dbReference>
<dbReference type="Gene3D" id="3.40.532.10">
    <property type="entry name" value="Peptidase C12, ubiquitin carboxyl-terminal hydrolase"/>
    <property type="match status" value="1"/>
</dbReference>
<dbReference type="InterPro" id="IPR038765">
    <property type="entry name" value="Papain-like_cys_pep_sf"/>
</dbReference>
<dbReference type="InterPro" id="IPR001578">
    <property type="entry name" value="Peptidase_C12_UCH"/>
</dbReference>
<dbReference type="InterPro" id="IPR036959">
    <property type="entry name" value="Peptidase_C12_UCH_sf"/>
</dbReference>
<dbReference type="InterPro" id="IPR057254">
    <property type="entry name" value="UCH_AS"/>
</dbReference>
<dbReference type="PANTHER" id="PTHR10589">
    <property type="entry name" value="UBIQUITIN CARBOXYL-TERMINAL HYDROLASE"/>
    <property type="match status" value="1"/>
</dbReference>
<dbReference type="PANTHER" id="PTHR10589:SF24">
    <property type="entry name" value="UBIQUITIN CARBOXYL-TERMINAL HYDROLASE ISOZYME L3"/>
    <property type="match status" value="1"/>
</dbReference>
<dbReference type="Pfam" id="PF01088">
    <property type="entry name" value="Peptidase_C12"/>
    <property type="match status" value="1"/>
</dbReference>
<dbReference type="PRINTS" id="PR00707">
    <property type="entry name" value="UBCTHYDRLASE"/>
</dbReference>
<dbReference type="SUPFAM" id="SSF54001">
    <property type="entry name" value="Cysteine proteinases"/>
    <property type="match status" value="1"/>
</dbReference>
<dbReference type="PROSITE" id="PS00140">
    <property type="entry name" value="UCH_1"/>
    <property type="match status" value="1"/>
</dbReference>
<dbReference type="PROSITE" id="PS52048">
    <property type="entry name" value="UCH_DOMAIN"/>
    <property type="match status" value="1"/>
</dbReference>
<accession>P15374</accession>
<accession>B2R970</accession>
<accession>Q5TBK8</accession>
<accession>Q6IBE9</accession>
<organism>
    <name type="scientific">Homo sapiens</name>
    <name type="common">Human</name>
    <dbReference type="NCBI Taxonomy" id="9606"/>
    <lineage>
        <taxon>Eukaryota</taxon>
        <taxon>Metazoa</taxon>
        <taxon>Chordata</taxon>
        <taxon>Craniata</taxon>
        <taxon>Vertebrata</taxon>
        <taxon>Euteleostomi</taxon>
        <taxon>Mammalia</taxon>
        <taxon>Eutheria</taxon>
        <taxon>Euarchontoglires</taxon>
        <taxon>Primates</taxon>
        <taxon>Haplorrhini</taxon>
        <taxon>Catarrhini</taxon>
        <taxon>Hominidae</taxon>
        <taxon>Homo</taxon>
    </lineage>
</organism>
<evidence type="ECO:0000255" key="1">
    <source>
        <dbReference type="PROSITE-ProRule" id="PRU01393"/>
    </source>
</evidence>
<evidence type="ECO:0000269" key="2">
    <source>
    </source>
</evidence>
<evidence type="ECO:0000269" key="3">
    <source>
    </source>
</evidence>
<evidence type="ECO:0000269" key="4">
    <source>
    </source>
</evidence>
<evidence type="ECO:0000269" key="5">
    <source>
    </source>
</evidence>
<evidence type="ECO:0000269" key="6">
    <source>
    </source>
</evidence>
<evidence type="ECO:0000269" key="7">
    <source>
    </source>
</evidence>
<evidence type="ECO:0000269" key="8">
    <source>
    </source>
</evidence>
<evidence type="ECO:0000269" key="9">
    <source>
    </source>
</evidence>
<evidence type="ECO:0000269" key="10">
    <source>
    </source>
</evidence>
<evidence type="ECO:0000305" key="11"/>
<evidence type="ECO:0007744" key="12">
    <source>
    </source>
</evidence>
<evidence type="ECO:0007744" key="13">
    <source>
    </source>
</evidence>
<evidence type="ECO:0007744" key="14">
    <source>
    </source>
</evidence>
<evidence type="ECO:0007829" key="15">
    <source>
        <dbReference type="PDB" id="1XD3"/>
    </source>
</evidence>
<evidence type="ECO:0007829" key="16">
    <source>
        <dbReference type="PDB" id="6QML"/>
    </source>
</evidence>
<evidence type="ECO:0007829" key="17">
    <source>
        <dbReference type="PDB" id="7YV4"/>
    </source>
</evidence>
<reference key="1">
    <citation type="journal article" date="1989" name="Science">
        <title>The neuron-specific protein PGP 9.5 is a ubiquitin carboxyl-terminal hydrolase.</title>
        <authorList>
            <person name="Wilkinson K.D."/>
            <person name="Lee K."/>
            <person name="Deshpande S."/>
            <person name="Duerksen-Hughes P."/>
            <person name="Boss J.M."/>
            <person name="Pohl J."/>
        </authorList>
    </citation>
    <scope>NUCLEOTIDE SEQUENCE [MRNA]</scope>
    <scope>FUNCTION</scope>
    <scope>CATALYTIC ACTIVITY</scope>
</reference>
<reference key="2">
    <citation type="submission" date="2003-05" db="EMBL/GenBank/DDBJ databases">
        <title>Cloning of human full-length CDSs in BD Creator(TM) system donor vector.</title>
        <authorList>
            <person name="Kalnine N."/>
            <person name="Chen X."/>
            <person name="Rolfs A."/>
            <person name="Halleck A."/>
            <person name="Hines L."/>
            <person name="Eisenstein S."/>
            <person name="Koundinya M."/>
            <person name="Raphael J."/>
            <person name="Moreira D."/>
            <person name="Kelley T."/>
            <person name="LaBaer J."/>
            <person name="Lin Y."/>
            <person name="Phelan M."/>
            <person name="Farmer A."/>
        </authorList>
    </citation>
    <scope>NUCLEOTIDE SEQUENCE [LARGE SCALE MRNA]</scope>
</reference>
<reference key="3">
    <citation type="submission" date="2004-06" db="EMBL/GenBank/DDBJ databases">
        <title>Cloning of human full open reading frames in Gateway(TM) system entry vector (pDONR201).</title>
        <authorList>
            <person name="Ebert L."/>
            <person name="Schick M."/>
            <person name="Neubert P."/>
            <person name="Schatten R."/>
            <person name="Henze S."/>
            <person name="Korn B."/>
        </authorList>
    </citation>
    <scope>NUCLEOTIDE SEQUENCE [LARGE SCALE MRNA]</scope>
</reference>
<reference key="4">
    <citation type="journal article" date="2004" name="Nat. Genet.">
        <title>Complete sequencing and characterization of 21,243 full-length human cDNAs.</title>
        <authorList>
            <person name="Ota T."/>
            <person name="Suzuki Y."/>
            <person name="Nishikawa T."/>
            <person name="Otsuki T."/>
            <person name="Sugiyama T."/>
            <person name="Irie R."/>
            <person name="Wakamatsu A."/>
            <person name="Hayashi K."/>
            <person name="Sato H."/>
            <person name="Nagai K."/>
            <person name="Kimura K."/>
            <person name="Makita H."/>
            <person name="Sekine M."/>
            <person name="Obayashi M."/>
            <person name="Nishi T."/>
            <person name="Shibahara T."/>
            <person name="Tanaka T."/>
            <person name="Ishii S."/>
            <person name="Yamamoto J."/>
            <person name="Saito K."/>
            <person name="Kawai Y."/>
            <person name="Isono Y."/>
            <person name="Nakamura Y."/>
            <person name="Nagahari K."/>
            <person name="Murakami K."/>
            <person name="Yasuda T."/>
            <person name="Iwayanagi T."/>
            <person name="Wagatsuma M."/>
            <person name="Shiratori A."/>
            <person name="Sudo H."/>
            <person name="Hosoiri T."/>
            <person name="Kaku Y."/>
            <person name="Kodaira H."/>
            <person name="Kondo H."/>
            <person name="Sugawara M."/>
            <person name="Takahashi M."/>
            <person name="Kanda K."/>
            <person name="Yokoi T."/>
            <person name="Furuya T."/>
            <person name="Kikkawa E."/>
            <person name="Omura Y."/>
            <person name="Abe K."/>
            <person name="Kamihara K."/>
            <person name="Katsuta N."/>
            <person name="Sato K."/>
            <person name="Tanikawa M."/>
            <person name="Yamazaki M."/>
            <person name="Ninomiya K."/>
            <person name="Ishibashi T."/>
            <person name="Yamashita H."/>
            <person name="Murakawa K."/>
            <person name="Fujimori K."/>
            <person name="Tanai H."/>
            <person name="Kimata M."/>
            <person name="Watanabe M."/>
            <person name="Hiraoka S."/>
            <person name="Chiba Y."/>
            <person name="Ishida S."/>
            <person name="Ono Y."/>
            <person name="Takiguchi S."/>
            <person name="Watanabe S."/>
            <person name="Yosida M."/>
            <person name="Hotuta T."/>
            <person name="Kusano J."/>
            <person name="Kanehori K."/>
            <person name="Takahashi-Fujii A."/>
            <person name="Hara H."/>
            <person name="Tanase T.-O."/>
            <person name="Nomura Y."/>
            <person name="Togiya S."/>
            <person name="Komai F."/>
            <person name="Hara R."/>
            <person name="Takeuchi K."/>
            <person name="Arita M."/>
            <person name="Imose N."/>
            <person name="Musashino K."/>
            <person name="Yuuki H."/>
            <person name="Oshima A."/>
            <person name="Sasaki N."/>
            <person name="Aotsuka S."/>
            <person name="Yoshikawa Y."/>
            <person name="Matsunawa H."/>
            <person name="Ichihara T."/>
            <person name="Shiohata N."/>
            <person name="Sano S."/>
            <person name="Moriya S."/>
            <person name="Momiyama H."/>
            <person name="Satoh N."/>
            <person name="Takami S."/>
            <person name="Terashima Y."/>
            <person name="Suzuki O."/>
            <person name="Nakagawa S."/>
            <person name="Senoh A."/>
            <person name="Mizoguchi H."/>
            <person name="Goto Y."/>
            <person name="Shimizu F."/>
            <person name="Wakebe H."/>
            <person name="Hishigaki H."/>
            <person name="Watanabe T."/>
            <person name="Sugiyama A."/>
            <person name="Takemoto M."/>
            <person name="Kawakami B."/>
            <person name="Yamazaki M."/>
            <person name="Watanabe K."/>
            <person name="Kumagai A."/>
            <person name="Itakura S."/>
            <person name="Fukuzumi Y."/>
            <person name="Fujimori Y."/>
            <person name="Komiyama M."/>
            <person name="Tashiro H."/>
            <person name="Tanigami A."/>
            <person name="Fujiwara T."/>
            <person name="Ono T."/>
            <person name="Yamada K."/>
            <person name="Fujii Y."/>
            <person name="Ozaki K."/>
            <person name="Hirao M."/>
            <person name="Ohmori Y."/>
            <person name="Kawabata A."/>
            <person name="Hikiji T."/>
            <person name="Kobatake N."/>
            <person name="Inagaki H."/>
            <person name="Ikema Y."/>
            <person name="Okamoto S."/>
            <person name="Okitani R."/>
            <person name="Kawakami T."/>
            <person name="Noguchi S."/>
            <person name="Itoh T."/>
            <person name="Shigeta K."/>
            <person name="Senba T."/>
            <person name="Matsumura K."/>
            <person name="Nakajima Y."/>
            <person name="Mizuno T."/>
            <person name="Morinaga M."/>
            <person name="Sasaki M."/>
            <person name="Togashi T."/>
            <person name="Oyama M."/>
            <person name="Hata H."/>
            <person name="Watanabe M."/>
            <person name="Komatsu T."/>
            <person name="Mizushima-Sugano J."/>
            <person name="Satoh T."/>
            <person name="Shirai Y."/>
            <person name="Takahashi Y."/>
            <person name="Nakagawa K."/>
            <person name="Okumura K."/>
            <person name="Nagase T."/>
            <person name="Nomura N."/>
            <person name="Kikuchi H."/>
            <person name="Masuho Y."/>
            <person name="Yamashita R."/>
            <person name="Nakai K."/>
            <person name="Yada T."/>
            <person name="Nakamura Y."/>
            <person name="Ohara O."/>
            <person name="Isogai T."/>
            <person name="Sugano S."/>
        </authorList>
    </citation>
    <scope>NUCLEOTIDE SEQUENCE [LARGE SCALE MRNA]</scope>
    <source>
        <tissue>Brain</tissue>
    </source>
</reference>
<reference key="5">
    <citation type="journal article" date="2004" name="Nature">
        <title>The DNA sequence and analysis of human chromosome 13.</title>
        <authorList>
            <person name="Dunham A."/>
            <person name="Matthews L.H."/>
            <person name="Burton J."/>
            <person name="Ashurst J.L."/>
            <person name="Howe K.L."/>
            <person name="Ashcroft K.J."/>
            <person name="Beare D.M."/>
            <person name="Burford D.C."/>
            <person name="Hunt S.E."/>
            <person name="Griffiths-Jones S."/>
            <person name="Jones M.C."/>
            <person name="Keenan S.J."/>
            <person name="Oliver K."/>
            <person name="Scott C.E."/>
            <person name="Ainscough R."/>
            <person name="Almeida J.P."/>
            <person name="Ambrose K.D."/>
            <person name="Andrews D.T."/>
            <person name="Ashwell R.I.S."/>
            <person name="Babbage A.K."/>
            <person name="Bagguley C.L."/>
            <person name="Bailey J."/>
            <person name="Bannerjee R."/>
            <person name="Barlow K.F."/>
            <person name="Bates K."/>
            <person name="Beasley H."/>
            <person name="Bird C.P."/>
            <person name="Bray-Allen S."/>
            <person name="Brown A.J."/>
            <person name="Brown J.Y."/>
            <person name="Burrill W."/>
            <person name="Carder C."/>
            <person name="Carter N.P."/>
            <person name="Chapman J.C."/>
            <person name="Clamp M.E."/>
            <person name="Clark S.Y."/>
            <person name="Clarke G."/>
            <person name="Clee C.M."/>
            <person name="Clegg S.C."/>
            <person name="Cobley V."/>
            <person name="Collins J.E."/>
            <person name="Corby N."/>
            <person name="Coville G.J."/>
            <person name="Deloukas P."/>
            <person name="Dhami P."/>
            <person name="Dunham I."/>
            <person name="Dunn M."/>
            <person name="Earthrowl M.E."/>
            <person name="Ellington A.G."/>
            <person name="Faulkner L."/>
            <person name="Frankish A.G."/>
            <person name="Frankland J."/>
            <person name="French L."/>
            <person name="Garner P."/>
            <person name="Garnett J."/>
            <person name="Gilbert J.G.R."/>
            <person name="Gilson C.J."/>
            <person name="Ghori J."/>
            <person name="Grafham D.V."/>
            <person name="Gribble S.M."/>
            <person name="Griffiths C."/>
            <person name="Hall R.E."/>
            <person name="Hammond S."/>
            <person name="Harley J.L."/>
            <person name="Hart E.A."/>
            <person name="Heath P.D."/>
            <person name="Howden P.J."/>
            <person name="Huckle E.J."/>
            <person name="Hunt P.J."/>
            <person name="Hunt A.R."/>
            <person name="Johnson C."/>
            <person name="Johnson D."/>
            <person name="Kay M."/>
            <person name="Kimberley A.M."/>
            <person name="King A."/>
            <person name="Laird G.K."/>
            <person name="Langford C.J."/>
            <person name="Lawlor S."/>
            <person name="Leongamornlert D.A."/>
            <person name="Lloyd D.M."/>
            <person name="Lloyd C."/>
            <person name="Loveland J.E."/>
            <person name="Lovell J."/>
            <person name="Martin S."/>
            <person name="Mashreghi-Mohammadi M."/>
            <person name="McLaren S.J."/>
            <person name="McMurray A."/>
            <person name="Milne S."/>
            <person name="Moore M.J.F."/>
            <person name="Nickerson T."/>
            <person name="Palmer S.A."/>
            <person name="Pearce A.V."/>
            <person name="Peck A.I."/>
            <person name="Pelan S."/>
            <person name="Phillimore B."/>
            <person name="Porter K.M."/>
            <person name="Rice C.M."/>
            <person name="Searle S."/>
            <person name="Sehra H.K."/>
            <person name="Shownkeen R."/>
            <person name="Skuce C.D."/>
            <person name="Smith M."/>
            <person name="Steward C.A."/>
            <person name="Sycamore N."/>
            <person name="Tester J."/>
            <person name="Thomas D.W."/>
            <person name="Tracey A."/>
            <person name="Tromans A."/>
            <person name="Tubby B."/>
            <person name="Wall M."/>
            <person name="Wallis J.M."/>
            <person name="West A.P."/>
            <person name="Whitehead S.L."/>
            <person name="Willey D.L."/>
            <person name="Wilming L."/>
            <person name="Wray P.W."/>
            <person name="Wright M.W."/>
            <person name="Young L."/>
            <person name="Coulson A."/>
            <person name="Durbin R.M."/>
            <person name="Hubbard T."/>
            <person name="Sulston J.E."/>
            <person name="Beck S."/>
            <person name="Bentley D.R."/>
            <person name="Rogers J."/>
            <person name="Ross M.T."/>
        </authorList>
    </citation>
    <scope>NUCLEOTIDE SEQUENCE [LARGE SCALE GENOMIC DNA]</scope>
</reference>
<reference key="6">
    <citation type="submission" date="2005-07" db="EMBL/GenBank/DDBJ databases">
        <authorList>
            <person name="Mural R.J."/>
            <person name="Istrail S."/>
            <person name="Sutton G.G."/>
            <person name="Florea L."/>
            <person name="Halpern A.L."/>
            <person name="Mobarry C.M."/>
            <person name="Lippert R."/>
            <person name="Walenz B."/>
            <person name="Shatkay H."/>
            <person name="Dew I."/>
            <person name="Miller J.R."/>
            <person name="Flanigan M.J."/>
            <person name="Edwards N.J."/>
            <person name="Bolanos R."/>
            <person name="Fasulo D."/>
            <person name="Halldorsson B.V."/>
            <person name="Hannenhalli S."/>
            <person name="Turner R."/>
            <person name="Yooseph S."/>
            <person name="Lu F."/>
            <person name="Nusskern D.R."/>
            <person name="Shue B.C."/>
            <person name="Zheng X.H."/>
            <person name="Zhong F."/>
            <person name="Delcher A.L."/>
            <person name="Huson D.H."/>
            <person name="Kravitz S.A."/>
            <person name="Mouchard L."/>
            <person name="Reinert K."/>
            <person name="Remington K.A."/>
            <person name="Clark A.G."/>
            <person name="Waterman M.S."/>
            <person name="Eichler E.E."/>
            <person name="Adams M.D."/>
            <person name="Hunkapiller M.W."/>
            <person name="Myers E.W."/>
            <person name="Venter J.C."/>
        </authorList>
    </citation>
    <scope>NUCLEOTIDE SEQUENCE [LARGE SCALE GENOMIC DNA]</scope>
</reference>
<reference key="7">
    <citation type="journal article" date="2004" name="Genome Res.">
        <title>The status, quality, and expansion of the NIH full-length cDNA project: the Mammalian Gene Collection (MGC).</title>
        <authorList>
            <consortium name="The MGC Project Team"/>
        </authorList>
    </citation>
    <scope>NUCLEOTIDE SEQUENCE [LARGE SCALE MRNA]</scope>
    <source>
        <tissue>Lung</tissue>
    </source>
</reference>
<reference key="8">
    <citation type="journal article" date="1998" name="Biochem. Biophys. Res. Commun.">
        <title>Cleavage of the C-terminus of NEDD8 by UCH-L3.</title>
        <authorList>
            <person name="Wada H."/>
            <person name="Kito K."/>
            <person name="Caskey L.S."/>
            <person name="Yeh E.T.H."/>
            <person name="Kamitani T."/>
        </authorList>
    </citation>
    <scope>FUNCTION</scope>
    <scope>ENZYME ACTIVITY</scope>
    <scope>TISSUE SPECIFICITY</scope>
    <scope>MUTAGENESIS OF CYS-95</scope>
</reference>
<reference key="9">
    <citation type="journal article" date="2003" name="Proteomics">
        <title>Molecular profiling of the immune response in colon cancer using protein microarrays: occurrence of autoantibodies to ubiquitin C-terminal hydrolase L3.</title>
        <authorList>
            <person name="Nam M.J."/>
            <person name="Madoz-Gurpide J."/>
            <person name="Wang H."/>
            <person name="Lescure P."/>
            <person name="Schmalbach C.E."/>
            <person name="Zhao R."/>
            <person name="Misek D.E."/>
            <person name="Kuick R."/>
            <person name="Brenner D.E."/>
            <person name="Hanash S.M."/>
        </authorList>
    </citation>
    <scope>IDENTIFICATION AS TUMOR-ASSOCIATED ANTIGEN BY MASS SPECTROMETRY</scope>
</reference>
<reference key="10">
    <citation type="journal article" date="2004" name="Biochemistry">
        <title>Substrate profiling of deubiquitin hydrolases with a positional scanning library and mass spectrometry.</title>
        <authorList>
            <person name="Mason D.E."/>
            <person name="Ek J."/>
            <person name="Peters E.C."/>
            <person name="Harris J.L."/>
        </authorList>
    </citation>
    <scope>CATALYTIC ACTIVITY</scope>
    <scope>SUBSTRATE SPECIFICITY</scope>
</reference>
<reference key="11">
    <citation type="journal article" date="2007" name="Science">
        <title>ATM and ATR substrate analysis reveals extensive protein networks responsive to DNA damage.</title>
        <authorList>
            <person name="Matsuoka S."/>
            <person name="Ballif B.A."/>
            <person name="Smogorzewska A."/>
            <person name="McDonald E.R. III"/>
            <person name="Hurov K.E."/>
            <person name="Luo J."/>
            <person name="Bakalarski C.E."/>
            <person name="Zhao Z."/>
            <person name="Solimini N."/>
            <person name="Lerenthal Y."/>
            <person name="Shiloh Y."/>
            <person name="Gygi S.P."/>
            <person name="Elledge S.J."/>
        </authorList>
    </citation>
    <scope>IDENTIFICATION BY MASS SPECTROMETRY [LARGE SCALE ANALYSIS]</scope>
    <source>
        <tissue>Embryonic kidney</tissue>
    </source>
</reference>
<reference key="12">
    <citation type="journal article" date="2008" name="Proc. Natl. Acad. Sci. U.S.A.">
        <title>A quantitative atlas of mitotic phosphorylation.</title>
        <authorList>
            <person name="Dephoure N."/>
            <person name="Zhou C."/>
            <person name="Villen J."/>
            <person name="Beausoleil S.A."/>
            <person name="Bakalarski C.E."/>
            <person name="Elledge S.J."/>
            <person name="Gygi S.P."/>
        </authorList>
    </citation>
    <scope>PHOSPHORYLATION [LARGE SCALE ANALYSIS] AT SER-130</scope>
    <scope>IDENTIFICATION BY MASS SPECTROMETRY [LARGE SCALE ANALYSIS]</scope>
    <source>
        <tissue>Cervix carcinoma</tissue>
    </source>
</reference>
<reference key="13">
    <citation type="journal article" date="2009" name="J. Biol. Chem.">
        <title>Substrate filtering by the active site crossover loop in UCHL3 revealed by sortagging and gain-of-function mutations.</title>
        <authorList>
            <person name="Popp M.W."/>
            <person name="Artavanis-Tsakonas K."/>
            <person name="Ploegh H.L."/>
        </authorList>
    </citation>
    <scope>CATALYTIC ACTIVITY</scope>
</reference>
<reference key="14">
    <citation type="journal article" date="2009" name="Neurochem. Int.">
        <title>Ubiquitin dimers control the hydrolase activity of UCH-L3.</title>
        <authorList>
            <person name="Setsuie R."/>
            <person name="Sakurai M."/>
            <person name="Sakaguchi Y."/>
            <person name="Wada K."/>
        </authorList>
    </citation>
    <scope>IDENTIFICATION BY MASS SPECTROMETRY</scope>
    <scope>INTERACTION WITH UBIQUITIN</scope>
    <scope>FUNCTION</scope>
    <scope>ACTIVITY REGULATION</scope>
    <scope>MUTAGENESIS OF ASP-33 AND CYS-95</scope>
</reference>
<reference key="15">
    <citation type="journal article" date="2010" name="Neurochem. Int.">
        <title>Skeletal muscles of Uchl3 knockout mice show polyubiquitinated protein accumulation and stress responses.</title>
        <authorList>
            <person name="Setsuie R."/>
            <person name="Suzuki M."/>
            <person name="Tsuchiya Y."/>
            <person name="Wada K."/>
        </authorList>
    </citation>
    <scope>ENZYME ACTIVITY</scope>
    <scope>MUTAGENESIS OF ASP-33 AND CYS-95</scope>
</reference>
<reference key="16">
    <citation type="journal article" date="2011" name="BMC Syst. Biol.">
        <title>Initial characterization of the human central proteome.</title>
        <authorList>
            <person name="Burkard T.R."/>
            <person name="Planyavsky M."/>
            <person name="Kaupe I."/>
            <person name="Breitwieser F.P."/>
            <person name="Buerckstuemmer T."/>
            <person name="Bennett K.L."/>
            <person name="Superti-Furga G."/>
            <person name="Colinge J."/>
        </authorList>
    </citation>
    <scope>IDENTIFICATION BY MASS SPECTROMETRY [LARGE SCALE ANALYSIS]</scope>
</reference>
<reference key="17">
    <citation type="journal article" date="2011" name="FEBS Lett.">
        <title>Mutant ubiquitin (UBB(+1)) associated with neurodegenerative disorders is hydrolyzed by ubiquitin C-terminal hydrolase L3 (UCH-L3).</title>
        <authorList>
            <person name="Dennissen F.J."/>
            <person name="Kholod N."/>
            <person name="Hermes D.J."/>
            <person name="Kemmerling N."/>
            <person name="Steinbusch H.W."/>
            <person name="Dantuma N.P."/>
            <person name="van Leeuwen F.W."/>
        </authorList>
    </citation>
    <scope>FUNCTION</scope>
</reference>
<reference key="18">
    <citation type="journal article" date="2012" name="ChemBioChem">
        <title>Profiling ubiquitin linkage specificities of deubiquitinating enzymes with branched ubiquitin isopeptide probes.</title>
        <authorList>
            <person name="Iphofer A."/>
            <person name="Kummer A."/>
            <person name="Nimtz M."/>
            <person name="Ritter A."/>
            <person name="Arnold T."/>
            <person name="Frank R."/>
            <person name="van den Heuvel J."/>
            <person name="Kessler B.M."/>
            <person name="Jansch L."/>
            <person name="Franke R."/>
        </authorList>
    </citation>
    <scope>FUNCTION</scope>
    <scope>LINKAGE SPECIFICITY</scope>
</reference>
<reference key="19">
    <citation type="journal article" date="2013" name="J. Proteome Res.">
        <title>Toward a comprehensive characterization of a human cancer cell phosphoproteome.</title>
        <authorList>
            <person name="Zhou H."/>
            <person name="Di Palma S."/>
            <person name="Preisinger C."/>
            <person name="Peng M."/>
            <person name="Polat A.N."/>
            <person name="Heck A.J."/>
            <person name="Mohammed S."/>
        </authorList>
    </citation>
    <scope>PHOSPHORYLATION [LARGE SCALE ANALYSIS] AT SER-130</scope>
    <scope>IDENTIFICATION BY MASS SPECTROMETRY [LARGE SCALE ANALYSIS]</scope>
    <source>
        <tissue>Cervix carcinoma</tissue>
        <tissue>Erythroleukemia</tissue>
    </source>
</reference>
<reference key="20">
    <citation type="journal article" date="2014" name="J. Proteomics">
        <title>An enzyme assisted RP-RPLC approach for in-depth analysis of human liver phosphoproteome.</title>
        <authorList>
            <person name="Bian Y."/>
            <person name="Song C."/>
            <person name="Cheng K."/>
            <person name="Dong M."/>
            <person name="Wang F."/>
            <person name="Huang J."/>
            <person name="Sun D."/>
            <person name="Wang L."/>
            <person name="Ye M."/>
            <person name="Zou H."/>
        </authorList>
    </citation>
    <scope>PHOSPHORYLATION [LARGE SCALE ANALYSIS] AT SER-130</scope>
    <scope>IDENTIFICATION BY MASS SPECTROMETRY [LARGE SCALE ANALYSIS]</scope>
    <source>
        <tissue>Liver</tissue>
    </source>
</reference>
<reference key="21">
    <citation type="journal article" date="1997" name="EMBO J.">
        <title>Crystal structure of a deubiquitinating enzyme (human UCH-L3) at 1.8-A resolution.</title>
        <authorList>
            <person name="Johnston S.C."/>
            <person name="Larsen C.N."/>
            <person name="Cook W.J."/>
            <person name="Wilkinson K.D."/>
            <person name="Hill C.P."/>
        </authorList>
    </citation>
    <scope>X-RAY CRYSTALLOGRAPHY (1.8 ANGSTROMS)</scope>
</reference>
<reference key="22">
    <citation type="journal article" date="2005" name="J. Biol. Chem.">
        <title>Structure of the ubiquitin hydrolase UCH-L3 complexed with a suicide substrate.</title>
        <authorList>
            <person name="Misaghi S."/>
            <person name="Galardy P.J."/>
            <person name="Meester W.J.N."/>
            <person name="Ovaa H."/>
            <person name="Ploegh H.L."/>
            <person name="Gaudet R."/>
        </authorList>
    </citation>
    <scope>X-RAY CRYSTALLOGRAPHY (1.45 ANGSTROMS) IN COMPLEX WITH UBIQUITIN VINYLMETHYLESTER</scope>
    <scope>ENZYME ACTIVITY</scope>
</reference>
<protein>
    <recommendedName>
        <fullName>Ubiquitin carboxyl-terminal hydrolase isozyme L3</fullName>
        <shortName>UCH-L3</shortName>
        <ecNumber evidence="2 3 4 6 9 10">3.4.19.12</ecNumber>
    </recommendedName>
    <alternativeName>
        <fullName>Ubiquitin thioesterase L3</fullName>
    </alternativeName>
</protein>
<name>UCHL3_HUMAN</name>
<sequence length="230" mass="26183">MEGQRWLPLEANPEVTNQFLKQLGLHPNWQFVDVYGMDPELLSMVPRPVCAVLLLFPITEKYEVFRTEEEEKIKSQGQDVTSSVYFMKQTISNACGTIGLIHAIANNKDKMHFESGSTLKKFLEESVSMSPEERARYLENYDAIRVTHETSAHEGQTEAPSIDEKVDLHFIALVHVDGHLYELDGRKPFPINHGETSDETLLEDAIEVCKKFMERDPDELRFNAIALSAA</sequence>
<gene>
    <name type="primary">UCHL3</name>
</gene>